<comment type="catalytic activity">
    <reaction evidence="1">
        <text>CMP + ATP = CDP + ADP</text>
        <dbReference type="Rhea" id="RHEA:11600"/>
        <dbReference type="ChEBI" id="CHEBI:30616"/>
        <dbReference type="ChEBI" id="CHEBI:58069"/>
        <dbReference type="ChEBI" id="CHEBI:60377"/>
        <dbReference type="ChEBI" id="CHEBI:456216"/>
        <dbReference type="EC" id="2.7.4.25"/>
    </reaction>
</comment>
<comment type="catalytic activity">
    <reaction evidence="1">
        <text>dCMP + ATP = dCDP + ADP</text>
        <dbReference type="Rhea" id="RHEA:25094"/>
        <dbReference type="ChEBI" id="CHEBI:30616"/>
        <dbReference type="ChEBI" id="CHEBI:57566"/>
        <dbReference type="ChEBI" id="CHEBI:58593"/>
        <dbReference type="ChEBI" id="CHEBI:456216"/>
        <dbReference type="EC" id="2.7.4.25"/>
    </reaction>
</comment>
<comment type="subcellular location">
    <subcellularLocation>
        <location evidence="1">Cytoplasm</location>
    </subcellularLocation>
</comment>
<comment type="similarity">
    <text evidence="1">Belongs to the cytidylate kinase family. Type 1 subfamily.</text>
</comment>
<feature type="chain" id="PRO_0000131921" description="Cytidylate kinase 1">
    <location>
        <begin position="1"/>
        <end position="231"/>
    </location>
</feature>
<feature type="binding site" evidence="1">
    <location>
        <begin position="7"/>
        <end position="15"/>
    </location>
    <ligand>
        <name>ATP</name>
        <dbReference type="ChEBI" id="CHEBI:30616"/>
    </ligand>
</feature>
<keyword id="KW-0067">ATP-binding</keyword>
<keyword id="KW-0963">Cytoplasm</keyword>
<keyword id="KW-0418">Kinase</keyword>
<keyword id="KW-0547">Nucleotide-binding</keyword>
<keyword id="KW-1185">Reference proteome</keyword>
<keyword id="KW-0808">Transferase</keyword>
<accession>P43892</accession>
<dbReference type="EC" id="2.7.4.25" evidence="1"/>
<dbReference type="EMBL" id="L42023">
    <property type="protein sequence ID" value="AAC22872.1"/>
    <property type="molecule type" value="Genomic_DNA"/>
</dbReference>
<dbReference type="PIR" id="I64110">
    <property type="entry name" value="I64110"/>
</dbReference>
<dbReference type="RefSeq" id="NP_439375.2">
    <property type="nucleotide sequence ID" value="NC_000907.1"/>
</dbReference>
<dbReference type="STRING" id="71421.HI_1219"/>
<dbReference type="EnsemblBacteria" id="AAC22872">
    <property type="protein sequence ID" value="AAC22872"/>
    <property type="gene ID" value="HI_1219"/>
</dbReference>
<dbReference type="KEGG" id="hin:HI_1219"/>
<dbReference type="PATRIC" id="fig|71421.8.peg.1271"/>
<dbReference type="eggNOG" id="COG0283">
    <property type="taxonomic scope" value="Bacteria"/>
</dbReference>
<dbReference type="HOGENOM" id="CLU_079959_0_2_6"/>
<dbReference type="OrthoDB" id="9807434at2"/>
<dbReference type="PhylomeDB" id="P43892"/>
<dbReference type="Proteomes" id="UP000000579">
    <property type="component" value="Chromosome"/>
</dbReference>
<dbReference type="GO" id="GO:0005829">
    <property type="term" value="C:cytosol"/>
    <property type="evidence" value="ECO:0000318"/>
    <property type="project" value="GO_Central"/>
</dbReference>
<dbReference type="GO" id="GO:0004127">
    <property type="term" value="F:(d)CMP kinase activity"/>
    <property type="evidence" value="ECO:0000318"/>
    <property type="project" value="GO_Central"/>
</dbReference>
<dbReference type="GO" id="GO:0005524">
    <property type="term" value="F:ATP binding"/>
    <property type="evidence" value="ECO:0007669"/>
    <property type="project" value="UniProtKB-UniRule"/>
</dbReference>
<dbReference type="GO" id="GO:0036430">
    <property type="term" value="F:CMP kinase activity"/>
    <property type="evidence" value="ECO:0007669"/>
    <property type="project" value="RHEA"/>
</dbReference>
<dbReference type="GO" id="GO:0036431">
    <property type="term" value="F:dCMP kinase activity"/>
    <property type="evidence" value="ECO:0007669"/>
    <property type="project" value="RHEA"/>
</dbReference>
<dbReference type="GO" id="GO:0015949">
    <property type="term" value="P:nucleobase-containing small molecule interconversion"/>
    <property type="evidence" value="ECO:0000318"/>
    <property type="project" value="GO_Central"/>
</dbReference>
<dbReference type="GO" id="GO:0006220">
    <property type="term" value="P:pyrimidine nucleotide metabolic process"/>
    <property type="evidence" value="ECO:0007669"/>
    <property type="project" value="UniProtKB-UniRule"/>
</dbReference>
<dbReference type="CDD" id="cd02020">
    <property type="entry name" value="CMPK"/>
    <property type="match status" value="1"/>
</dbReference>
<dbReference type="FunFam" id="3.40.50.300:FF:000262">
    <property type="entry name" value="Cytidylate kinase"/>
    <property type="match status" value="1"/>
</dbReference>
<dbReference type="Gene3D" id="3.40.50.300">
    <property type="entry name" value="P-loop containing nucleotide triphosphate hydrolases"/>
    <property type="match status" value="1"/>
</dbReference>
<dbReference type="HAMAP" id="MF_00238">
    <property type="entry name" value="Cytidyl_kinase_type1"/>
    <property type="match status" value="1"/>
</dbReference>
<dbReference type="InterPro" id="IPR003136">
    <property type="entry name" value="Cytidylate_kin"/>
</dbReference>
<dbReference type="InterPro" id="IPR011994">
    <property type="entry name" value="Cytidylate_kinase_dom"/>
</dbReference>
<dbReference type="InterPro" id="IPR027417">
    <property type="entry name" value="P-loop_NTPase"/>
</dbReference>
<dbReference type="NCBIfam" id="TIGR00017">
    <property type="entry name" value="cmk"/>
    <property type="match status" value="1"/>
</dbReference>
<dbReference type="PANTHER" id="PTHR21299:SF2">
    <property type="entry name" value="CYTIDYLATE KINASE"/>
    <property type="match status" value="1"/>
</dbReference>
<dbReference type="PANTHER" id="PTHR21299">
    <property type="entry name" value="CYTIDYLATE KINASE/PANTOATE-BETA-ALANINE LIGASE"/>
    <property type="match status" value="1"/>
</dbReference>
<dbReference type="Pfam" id="PF02224">
    <property type="entry name" value="Cytidylate_kin"/>
    <property type="match status" value="1"/>
</dbReference>
<dbReference type="SUPFAM" id="SSF52540">
    <property type="entry name" value="P-loop containing nucleoside triphosphate hydrolases"/>
    <property type="match status" value="1"/>
</dbReference>
<sequence>MIITVDGPSGAGKGTLCYALAEKLGYALLDSGAIYRVTALAALQRKTDLTNETDLAELARHLDIQFIPQNGEVSILLAGMDVSRLIRTQEVADAASKVAVFQKVRSALLQLQQDFAKNDGLIADGRDMGTVVFPNAQVKLFLDASAEERAKRRYKQLQNKGINGNFAQILAEIKERDFRDRNREVAPLKPADDALLLDSTTLSIDEVIDQALAYIQRXGISFRFNCLFKEE</sequence>
<protein>
    <recommendedName>
        <fullName evidence="1">Cytidylate kinase 1</fullName>
        <shortName evidence="1">CK 1</shortName>
        <ecNumber evidence="1">2.7.4.25</ecNumber>
    </recommendedName>
    <alternativeName>
        <fullName evidence="1">Cytidine monophosphate kinase 1</fullName>
        <shortName evidence="1">CMP kinase 1</shortName>
    </alternativeName>
</protein>
<reference key="1">
    <citation type="journal article" date="1995" name="Science">
        <title>Whole-genome random sequencing and assembly of Haemophilus influenzae Rd.</title>
        <authorList>
            <person name="Fleischmann R.D."/>
            <person name="Adams M.D."/>
            <person name="White O."/>
            <person name="Clayton R.A."/>
            <person name="Kirkness E.F."/>
            <person name="Kerlavage A.R."/>
            <person name="Bult C.J."/>
            <person name="Tomb J.-F."/>
            <person name="Dougherty B.A."/>
            <person name="Merrick J.M."/>
            <person name="McKenney K."/>
            <person name="Sutton G.G."/>
            <person name="FitzHugh W."/>
            <person name="Fields C.A."/>
            <person name="Gocayne J.D."/>
            <person name="Scott J.D."/>
            <person name="Shirley R."/>
            <person name="Liu L.-I."/>
            <person name="Glodek A."/>
            <person name="Kelley J.M."/>
            <person name="Weidman J.F."/>
            <person name="Phillips C.A."/>
            <person name="Spriggs T."/>
            <person name="Hedblom E."/>
            <person name="Cotton M.D."/>
            <person name="Utterback T.R."/>
            <person name="Hanna M.C."/>
            <person name="Nguyen D.T."/>
            <person name="Saudek D.M."/>
            <person name="Brandon R.C."/>
            <person name="Fine L.D."/>
            <person name="Fritchman J.L."/>
            <person name="Fuhrmann J.L."/>
            <person name="Geoghagen N.S.M."/>
            <person name="Gnehm C.L."/>
            <person name="McDonald L.A."/>
            <person name="Small K.V."/>
            <person name="Fraser C.M."/>
            <person name="Smith H.O."/>
            <person name="Venter J.C."/>
        </authorList>
    </citation>
    <scope>NUCLEOTIDE SEQUENCE [LARGE SCALE GENOMIC DNA]</scope>
    <source>
        <strain>ATCC 51907 / DSM 11121 / KW20 / Rd</strain>
    </source>
</reference>
<proteinExistence type="inferred from homology"/>
<organism>
    <name type="scientific">Haemophilus influenzae (strain ATCC 51907 / DSM 11121 / KW20 / Rd)</name>
    <dbReference type="NCBI Taxonomy" id="71421"/>
    <lineage>
        <taxon>Bacteria</taxon>
        <taxon>Pseudomonadati</taxon>
        <taxon>Pseudomonadota</taxon>
        <taxon>Gammaproteobacteria</taxon>
        <taxon>Pasteurellales</taxon>
        <taxon>Pasteurellaceae</taxon>
        <taxon>Haemophilus</taxon>
    </lineage>
</organism>
<gene>
    <name evidence="1" type="primary">cmk1</name>
    <name type="synonym">cmkA</name>
    <name type="ordered locus">HI_1219</name>
</gene>
<evidence type="ECO:0000255" key="1">
    <source>
        <dbReference type="HAMAP-Rule" id="MF_00238"/>
    </source>
</evidence>
<name>KCY1_HAEIN</name>